<dbReference type="EC" id="7.1.2.2" evidence="1"/>
<dbReference type="EMBL" id="AE000512">
    <property type="protein sequence ID" value="AAD36679.1"/>
    <property type="molecule type" value="Genomic_DNA"/>
</dbReference>
<dbReference type="PIR" id="F72231">
    <property type="entry name" value="F72231"/>
</dbReference>
<dbReference type="RefSeq" id="NP_229412.1">
    <property type="nucleotide sequence ID" value="NC_000853.1"/>
</dbReference>
<dbReference type="RefSeq" id="WP_004082064.1">
    <property type="nucleotide sequence ID" value="NZ_CP011107.1"/>
</dbReference>
<dbReference type="PDB" id="2R9V">
    <property type="method" value="X-ray"/>
    <property type="resolution" value="2.10 A"/>
    <property type="chains" value="A=2-503"/>
</dbReference>
<dbReference type="PDBsum" id="2R9V"/>
<dbReference type="SMR" id="Q9X1U7"/>
<dbReference type="FunCoup" id="Q9X1U7">
    <property type="interactions" value="339"/>
</dbReference>
<dbReference type="STRING" id="243274.TM_1612"/>
<dbReference type="PaxDb" id="243274-THEMA_06190"/>
<dbReference type="DNASU" id="897935"/>
<dbReference type="EnsemblBacteria" id="AAD36679">
    <property type="protein sequence ID" value="AAD36679"/>
    <property type="gene ID" value="TM_1612"/>
</dbReference>
<dbReference type="KEGG" id="tma:TM1612"/>
<dbReference type="KEGG" id="tmi:THEMA_06190"/>
<dbReference type="KEGG" id="tmm:Tmari_1620"/>
<dbReference type="KEGG" id="tmw:THMA_1652"/>
<dbReference type="eggNOG" id="COG0056">
    <property type="taxonomic scope" value="Bacteria"/>
</dbReference>
<dbReference type="InParanoid" id="Q9X1U7"/>
<dbReference type="OrthoDB" id="9803053at2"/>
<dbReference type="EvolutionaryTrace" id="Q9X1U7"/>
<dbReference type="Proteomes" id="UP000008183">
    <property type="component" value="Chromosome"/>
</dbReference>
<dbReference type="GO" id="GO:0005886">
    <property type="term" value="C:plasma membrane"/>
    <property type="evidence" value="ECO:0007669"/>
    <property type="project" value="UniProtKB-SubCell"/>
</dbReference>
<dbReference type="GO" id="GO:0045259">
    <property type="term" value="C:proton-transporting ATP synthase complex"/>
    <property type="evidence" value="ECO:0007669"/>
    <property type="project" value="UniProtKB-KW"/>
</dbReference>
<dbReference type="GO" id="GO:0043531">
    <property type="term" value="F:ADP binding"/>
    <property type="evidence" value="ECO:0000318"/>
    <property type="project" value="GO_Central"/>
</dbReference>
<dbReference type="GO" id="GO:0005524">
    <property type="term" value="F:ATP binding"/>
    <property type="evidence" value="ECO:0000318"/>
    <property type="project" value="GO_Central"/>
</dbReference>
<dbReference type="GO" id="GO:0046933">
    <property type="term" value="F:proton-transporting ATP synthase activity, rotational mechanism"/>
    <property type="evidence" value="ECO:0007669"/>
    <property type="project" value="UniProtKB-UniRule"/>
</dbReference>
<dbReference type="GO" id="GO:0015986">
    <property type="term" value="P:proton motive force-driven ATP synthesis"/>
    <property type="evidence" value="ECO:0000318"/>
    <property type="project" value="GO_Central"/>
</dbReference>
<dbReference type="CDD" id="cd18113">
    <property type="entry name" value="ATP-synt_F1_alpha_C"/>
    <property type="match status" value="1"/>
</dbReference>
<dbReference type="CDD" id="cd18116">
    <property type="entry name" value="ATP-synt_F1_alpha_N"/>
    <property type="match status" value="1"/>
</dbReference>
<dbReference type="CDD" id="cd01132">
    <property type="entry name" value="F1-ATPase_alpha_CD"/>
    <property type="match status" value="1"/>
</dbReference>
<dbReference type="FunFam" id="1.20.150.20:FF:000001">
    <property type="entry name" value="ATP synthase subunit alpha"/>
    <property type="match status" value="1"/>
</dbReference>
<dbReference type="FunFam" id="2.40.30.20:FF:000001">
    <property type="entry name" value="ATP synthase subunit alpha"/>
    <property type="match status" value="1"/>
</dbReference>
<dbReference type="FunFam" id="3.40.50.300:FF:000002">
    <property type="entry name" value="ATP synthase subunit alpha"/>
    <property type="match status" value="1"/>
</dbReference>
<dbReference type="Gene3D" id="2.40.30.20">
    <property type="match status" value="1"/>
</dbReference>
<dbReference type="Gene3D" id="1.20.150.20">
    <property type="entry name" value="ATP synthase alpha/beta chain, C-terminal domain"/>
    <property type="match status" value="1"/>
</dbReference>
<dbReference type="Gene3D" id="3.40.50.300">
    <property type="entry name" value="P-loop containing nucleotide triphosphate hydrolases"/>
    <property type="match status" value="1"/>
</dbReference>
<dbReference type="HAMAP" id="MF_01346">
    <property type="entry name" value="ATP_synth_alpha_bact"/>
    <property type="match status" value="1"/>
</dbReference>
<dbReference type="InterPro" id="IPR023366">
    <property type="entry name" value="ATP_synth_asu-like_sf"/>
</dbReference>
<dbReference type="InterPro" id="IPR000793">
    <property type="entry name" value="ATP_synth_asu_C"/>
</dbReference>
<dbReference type="InterPro" id="IPR038376">
    <property type="entry name" value="ATP_synth_asu_C_sf"/>
</dbReference>
<dbReference type="InterPro" id="IPR033732">
    <property type="entry name" value="ATP_synth_F1_a_nt-bd_dom"/>
</dbReference>
<dbReference type="InterPro" id="IPR005294">
    <property type="entry name" value="ATP_synth_F1_asu"/>
</dbReference>
<dbReference type="InterPro" id="IPR020003">
    <property type="entry name" value="ATPase_a/bsu_AS"/>
</dbReference>
<dbReference type="InterPro" id="IPR004100">
    <property type="entry name" value="ATPase_F1/V1/A1_a/bsu_N"/>
</dbReference>
<dbReference type="InterPro" id="IPR036121">
    <property type="entry name" value="ATPase_F1/V1/A1_a/bsu_N_sf"/>
</dbReference>
<dbReference type="InterPro" id="IPR000194">
    <property type="entry name" value="ATPase_F1/V1/A1_a/bsu_nucl-bd"/>
</dbReference>
<dbReference type="InterPro" id="IPR027417">
    <property type="entry name" value="P-loop_NTPase"/>
</dbReference>
<dbReference type="NCBIfam" id="TIGR00962">
    <property type="entry name" value="atpA"/>
    <property type="match status" value="1"/>
</dbReference>
<dbReference type="NCBIfam" id="NF009884">
    <property type="entry name" value="PRK13343.1"/>
    <property type="match status" value="1"/>
</dbReference>
<dbReference type="PANTHER" id="PTHR48082">
    <property type="entry name" value="ATP SYNTHASE SUBUNIT ALPHA, MITOCHONDRIAL"/>
    <property type="match status" value="1"/>
</dbReference>
<dbReference type="PANTHER" id="PTHR48082:SF2">
    <property type="entry name" value="ATP SYNTHASE SUBUNIT ALPHA, MITOCHONDRIAL"/>
    <property type="match status" value="1"/>
</dbReference>
<dbReference type="Pfam" id="PF00006">
    <property type="entry name" value="ATP-synt_ab"/>
    <property type="match status" value="1"/>
</dbReference>
<dbReference type="Pfam" id="PF00306">
    <property type="entry name" value="ATP-synt_ab_C"/>
    <property type="match status" value="1"/>
</dbReference>
<dbReference type="Pfam" id="PF02874">
    <property type="entry name" value="ATP-synt_ab_N"/>
    <property type="match status" value="1"/>
</dbReference>
<dbReference type="PIRSF" id="PIRSF039088">
    <property type="entry name" value="F_ATPase_subunit_alpha"/>
    <property type="match status" value="1"/>
</dbReference>
<dbReference type="SUPFAM" id="SSF47917">
    <property type="entry name" value="C-terminal domain of alpha and beta subunits of F1 ATP synthase"/>
    <property type="match status" value="1"/>
</dbReference>
<dbReference type="SUPFAM" id="SSF50615">
    <property type="entry name" value="N-terminal domain of alpha and beta subunits of F1 ATP synthase"/>
    <property type="match status" value="1"/>
</dbReference>
<dbReference type="SUPFAM" id="SSF52540">
    <property type="entry name" value="P-loop containing nucleoside triphosphate hydrolases"/>
    <property type="match status" value="1"/>
</dbReference>
<dbReference type="PROSITE" id="PS00152">
    <property type="entry name" value="ATPASE_ALPHA_BETA"/>
    <property type="match status" value="1"/>
</dbReference>
<name>ATPA_THEMA</name>
<protein>
    <recommendedName>
        <fullName evidence="1">ATP synthase subunit alpha</fullName>
        <ecNumber evidence="1">7.1.2.2</ecNumber>
    </recommendedName>
    <alternativeName>
        <fullName evidence="1">ATP synthase F1 sector subunit alpha</fullName>
    </alternativeName>
    <alternativeName>
        <fullName evidence="1">F-ATPase subunit alpha</fullName>
    </alternativeName>
</protein>
<keyword id="KW-0002">3D-structure</keyword>
<keyword id="KW-0066">ATP synthesis</keyword>
<keyword id="KW-0067">ATP-binding</keyword>
<keyword id="KW-0997">Cell inner membrane</keyword>
<keyword id="KW-1003">Cell membrane</keyword>
<keyword id="KW-0139">CF(1)</keyword>
<keyword id="KW-0375">Hydrogen ion transport</keyword>
<keyword id="KW-0406">Ion transport</keyword>
<keyword id="KW-0472">Membrane</keyword>
<keyword id="KW-0547">Nucleotide-binding</keyword>
<keyword id="KW-1185">Reference proteome</keyword>
<keyword id="KW-1278">Translocase</keyword>
<keyword id="KW-0813">Transport</keyword>
<evidence type="ECO:0000255" key="1">
    <source>
        <dbReference type="HAMAP-Rule" id="MF_01346"/>
    </source>
</evidence>
<evidence type="ECO:0007829" key="2">
    <source>
        <dbReference type="PDB" id="2R9V"/>
    </source>
</evidence>
<accession>Q9X1U7</accession>
<proteinExistence type="evidence at protein level"/>
<sequence length="503" mass="56062">MRINPGEITKVLEEKIKSFEEKIDLEDTGKVIQVGDGIARAYGLNKVMVSELVEFVETGVKGVAFNLEEDNVGIIILGEYKDIKEGHTVRRLKRIIEVPVGEELLGRVVNPLGEPLDGKGPINAKNFRPIEIKAPGVIYRKPVDTPLQTGIKAIDSMIPIGRGQRELIIGDRQTGKTAIAIDTIINQKGQGVYCIYVAIGQKKSAIARIIDKLRQYGAMEYTTVVVASASDPASLQYIAPYAGCAMGEYFAYSGRDALVVYDDLSKHAVAYRQLSLLMRRPPGREAYPGDIFYLHSRLLERAVRLNDKLGGGSLTALPIVETQANDISAYIPTNVISITDGQIYLEPGLFYAGQRPAINVGLSVSRVGGSAQIKAMKQVAGMLRIDLAQYRELETFAQFATELDPATRAQIIRGQRLMELLKQEQYSPMPVEEQVVVLFAGVRGYLDDLPVEEVRRFEKEFLRFMHEKHQDILDDIKTKKELTSETEEKLKKAIEEFKTTFRV</sequence>
<gene>
    <name evidence="1" type="primary">atpA</name>
    <name type="ordered locus">TM_1612</name>
</gene>
<reference key="1">
    <citation type="journal article" date="1999" name="Nature">
        <title>Evidence for lateral gene transfer between Archaea and Bacteria from genome sequence of Thermotoga maritima.</title>
        <authorList>
            <person name="Nelson K.E."/>
            <person name="Clayton R.A."/>
            <person name="Gill S.R."/>
            <person name="Gwinn M.L."/>
            <person name="Dodson R.J."/>
            <person name="Haft D.H."/>
            <person name="Hickey E.K."/>
            <person name="Peterson J.D."/>
            <person name="Nelson W.C."/>
            <person name="Ketchum K.A."/>
            <person name="McDonald L.A."/>
            <person name="Utterback T.R."/>
            <person name="Malek J.A."/>
            <person name="Linher K.D."/>
            <person name="Garrett M.M."/>
            <person name="Stewart A.M."/>
            <person name="Cotton M.D."/>
            <person name="Pratt M.S."/>
            <person name="Phillips C.A."/>
            <person name="Richardson D.L."/>
            <person name="Heidelberg J.F."/>
            <person name="Sutton G.G."/>
            <person name="Fleischmann R.D."/>
            <person name="Eisen J.A."/>
            <person name="White O."/>
            <person name="Salzberg S.L."/>
            <person name="Smith H.O."/>
            <person name="Venter J.C."/>
            <person name="Fraser C.M."/>
        </authorList>
    </citation>
    <scope>NUCLEOTIDE SEQUENCE [LARGE SCALE GENOMIC DNA]</scope>
    <source>
        <strain>ATCC 43589 / DSM 3109 / JCM 10099 / NBRC 100826 / MSB8</strain>
    </source>
</reference>
<comment type="function">
    <text evidence="1">Produces ATP from ADP in the presence of a proton gradient across the membrane. The alpha chain is a regulatory subunit.</text>
</comment>
<comment type="catalytic activity">
    <reaction evidence="1">
        <text>ATP + H2O + 4 H(+)(in) = ADP + phosphate + 5 H(+)(out)</text>
        <dbReference type="Rhea" id="RHEA:57720"/>
        <dbReference type="ChEBI" id="CHEBI:15377"/>
        <dbReference type="ChEBI" id="CHEBI:15378"/>
        <dbReference type="ChEBI" id="CHEBI:30616"/>
        <dbReference type="ChEBI" id="CHEBI:43474"/>
        <dbReference type="ChEBI" id="CHEBI:456216"/>
        <dbReference type="EC" id="7.1.2.2"/>
    </reaction>
</comment>
<comment type="subunit">
    <text evidence="1">F-type ATPases have 2 components, CF(1) - the catalytic core - and CF(0) - the membrane proton channel. CF(1) has five subunits: alpha(3), beta(3), gamma(1), delta(1), epsilon(1). CF(0) has three main subunits: a(1), b(2) and c(9-12). The alpha and beta chains form an alternating ring which encloses part of the gamma chain. CF(1) is attached to CF(0) by a central stalk formed by the gamma and epsilon chains, while a peripheral stalk is formed by the delta and b chains.</text>
</comment>
<comment type="subcellular location">
    <subcellularLocation>
        <location evidence="1">Cell inner membrane</location>
        <topology evidence="1">Peripheral membrane protein</topology>
    </subcellularLocation>
</comment>
<comment type="similarity">
    <text evidence="1">Belongs to the ATPase alpha/beta chains family.</text>
</comment>
<feature type="chain" id="PRO_0000238387" description="ATP synthase subunit alpha">
    <location>
        <begin position="1"/>
        <end position="503"/>
    </location>
</feature>
<feature type="binding site" evidence="1">
    <location>
        <begin position="170"/>
        <end position="177"/>
    </location>
    <ligand>
        <name>ATP</name>
        <dbReference type="ChEBI" id="CHEBI:30616"/>
    </ligand>
</feature>
<feature type="site" description="Required for activity" evidence="1">
    <location>
        <position position="363"/>
    </location>
</feature>
<feature type="turn" evidence="2">
    <location>
        <begin position="25"/>
        <end position="27"/>
    </location>
</feature>
<feature type="strand" evidence="2">
    <location>
        <begin position="28"/>
        <end position="35"/>
    </location>
</feature>
<feature type="strand" evidence="2">
    <location>
        <begin position="38"/>
        <end position="43"/>
    </location>
</feature>
<feature type="strand" evidence="2">
    <location>
        <begin position="51"/>
        <end position="55"/>
    </location>
</feature>
<feature type="turn" evidence="2">
    <location>
        <begin position="56"/>
        <end position="58"/>
    </location>
</feature>
<feature type="strand" evidence="2">
    <location>
        <begin position="61"/>
        <end position="66"/>
    </location>
</feature>
<feature type="strand" evidence="2">
    <location>
        <begin position="72"/>
        <end position="78"/>
    </location>
</feature>
<feature type="strand" evidence="2">
    <location>
        <begin position="88"/>
        <end position="95"/>
    </location>
</feature>
<feature type="strand" evidence="2">
    <location>
        <begin position="97"/>
        <end position="101"/>
    </location>
</feature>
<feature type="helix" evidence="2">
    <location>
        <begin position="102"/>
        <end position="104"/>
    </location>
</feature>
<feature type="strand" evidence="2">
    <location>
        <begin position="117"/>
        <end position="119"/>
    </location>
</feature>
<feature type="strand" evidence="2">
    <location>
        <begin position="125"/>
        <end position="130"/>
    </location>
</feature>
<feature type="helix" evidence="2">
    <location>
        <begin position="137"/>
        <end position="139"/>
    </location>
</feature>
<feature type="strand" evidence="2">
    <location>
        <begin position="145"/>
        <end position="147"/>
    </location>
</feature>
<feature type="helix" evidence="2">
    <location>
        <begin position="152"/>
        <end position="157"/>
    </location>
</feature>
<feature type="strand" evidence="2">
    <location>
        <begin position="165"/>
        <end position="171"/>
    </location>
</feature>
<feature type="helix" evidence="2">
    <location>
        <begin position="176"/>
        <end position="185"/>
    </location>
</feature>
<feature type="turn" evidence="2">
    <location>
        <begin position="186"/>
        <end position="191"/>
    </location>
</feature>
<feature type="strand" evidence="2">
    <location>
        <begin position="192"/>
        <end position="200"/>
    </location>
</feature>
<feature type="helix" evidence="2">
    <location>
        <begin position="203"/>
        <end position="215"/>
    </location>
</feature>
<feature type="helix" evidence="2">
    <location>
        <begin position="218"/>
        <end position="221"/>
    </location>
</feature>
<feature type="strand" evidence="2">
    <location>
        <begin position="222"/>
        <end position="227"/>
    </location>
</feature>
<feature type="helix" evidence="2">
    <location>
        <begin position="233"/>
        <end position="251"/>
    </location>
</feature>
<feature type="turn" evidence="2">
    <location>
        <begin position="252"/>
        <end position="254"/>
    </location>
</feature>
<feature type="strand" evidence="2">
    <location>
        <begin position="256"/>
        <end position="262"/>
    </location>
</feature>
<feature type="helix" evidence="2">
    <location>
        <begin position="264"/>
        <end position="276"/>
    </location>
</feature>
<feature type="helix" evidence="2">
    <location>
        <begin position="291"/>
        <end position="299"/>
    </location>
</feature>
<feature type="strand" evidence="2">
    <location>
        <begin position="303"/>
        <end position="305"/>
    </location>
</feature>
<feature type="turn" evidence="2">
    <location>
        <begin position="307"/>
        <end position="310"/>
    </location>
</feature>
<feature type="strand" evidence="2">
    <location>
        <begin position="313"/>
        <end position="323"/>
    </location>
</feature>
<feature type="helix" evidence="2">
    <location>
        <begin position="330"/>
        <end position="337"/>
    </location>
</feature>
<feature type="strand" evidence="2">
    <location>
        <begin position="339"/>
        <end position="345"/>
    </location>
</feature>
<feature type="helix" evidence="2">
    <location>
        <begin position="347"/>
        <end position="352"/>
    </location>
</feature>
<feature type="turn" evidence="2">
    <location>
        <begin position="360"/>
        <end position="362"/>
    </location>
</feature>
<feature type="helix" evidence="2">
    <location>
        <begin position="366"/>
        <end position="368"/>
    </location>
</feature>
<feature type="turn" evidence="2">
    <location>
        <begin position="369"/>
        <end position="371"/>
    </location>
</feature>
<feature type="helix" evidence="2">
    <location>
        <begin position="374"/>
        <end position="394"/>
    </location>
</feature>
<feature type="helix" evidence="2">
    <location>
        <begin position="397"/>
        <end position="399"/>
    </location>
</feature>
<feature type="helix" evidence="2">
    <location>
        <begin position="405"/>
        <end position="420"/>
    </location>
</feature>
<feature type="helix" evidence="2">
    <location>
        <begin position="431"/>
        <end position="442"/>
    </location>
</feature>
<feature type="turn" evidence="2">
    <location>
        <begin position="443"/>
        <end position="448"/>
    </location>
</feature>
<feature type="helix" evidence="2">
    <location>
        <begin position="451"/>
        <end position="453"/>
    </location>
</feature>
<feature type="helix" evidence="2">
    <location>
        <begin position="454"/>
        <end position="468"/>
    </location>
</feature>
<feature type="helix" evidence="2">
    <location>
        <begin position="470"/>
        <end position="479"/>
    </location>
</feature>
<feature type="helix" evidence="2">
    <location>
        <begin position="484"/>
        <end position="500"/>
    </location>
</feature>
<organism>
    <name type="scientific">Thermotoga maritima (strain ATCC 43589 / DSM 3109 / JCM 10099 / NBRC 100826 / MSB8)</name>
    <dbReference type="NCBI Taxonomy" id="243274"/>
    <lineage>
        <taxon>Bacteria</taxon>
        <taxon>Thermotogati</taxon>
        <taxon>Thermotogota</taxon>
        <taxon>Thermotogae</taxon>
        <taxon>Thermotogales</taxon>
        <taxon>Thermotogaceae</taxon>
        <taxon>Thermotoga</taxon>
    </lineage>
</organism>